<name>MURD_HAEI8</name>
<sequence>MNAYQNKNITIIGLGKTGLSCVDYLLSQQANIRVIDTRKKPTGIDKLPQNIPLHTGSLNQEWLLESDMIVISPGLAVKTPEIQTALKAGVEVIGDIELFCRAATKPIVGITGSNGKSTVTTLVYEMAKAAGVKVGMGGNIGIPALSLLNEDCELYVLELSSFQLETTYSLKAAAATVLNVTEDHMDRYMDLEDYRQAKLRIYHNAEVGVLNNEDKLTFGEGENQARQTVSFAENSADYWLKTENGKQYLMVKDEVILPCEEVTLVGRHNYMNILAATALAQAVGINLDSIRTALRHFKGLDHRFQLVHQANGIRWINDSKATNVGSTVAALAGLYIEGKLHLLLGGDGKGADFSELAELINQPHIICYCFGRDGVQLAKFSSQSYLFETMEQAIEFLRPTLQSGDMVLLSPACASLDQFASFEKRGEEFTHLAQYSA</sequence>
<comment type="function">
    <text evidence="1">Cell wall formation. Catalyzes the addition of glutamate to the nucleotide precursor UDP-N-acetylmuramoyl-L-alanine (UMA).</text>
</comment>
<comment type="catalytic activity">
    <reaction evidence="1">
        <text>UDP-N-acetyl-alpha-D-muramoyl-L-alanine + D-glutamate + ATP = UDP-N-acetyl-alpha-D-muramoyl-L-alanyl-D-glutamate + ADP + phosphate + H(+)</text>
        <dbReference type="Rhea" id="RHEA:16429"/>
        <dbReference type="ChEBI" id="CHEBI:15378"/>
        <dbReference type="ChEBI" id="CHEBI:29986"/>
        <dbReference type="ChEBI" id="CHEBI:30616"/>
        <dbReference type="ChEBI" id="CHEBI:43474"/>
        <dbReference type="ChEBI" id="CHEBI:83898"/>
        <dbReference type="ChEBI" id="CHEBI:83900"/>
        <dbReference type="ChEBI" id="CHEBI:456216"/>
        <dbReference type="EC" id="6.3.2.9"/>
    </reaction>
</comment>
<comment type="pathway">
    <text evidence="1">Cell wall biogenesis; peptidoglycan biosynthesis.</text>
</comment>
<comment type="subcellular location">
    <subcellularLocation>
        <location evidence="1">Cytoplasm</location>
    </subcellularLocation>
</comment>
<comment type="similarity">
    <text evidence="1">Belongs to the MurCDEF family.</text>
</comment>
<evidence type="ECO:0000255" key="1">
    <source>
        <dbReference type="HAMAP-Rule" id="MF_00639"/>
    </source>
</evidence>
<gene>
    <name evidence="1" type="primary">murD</name>
    <name type="ordered locus">NTHI1303</name>
</gene>
<dbReference type="EC" id="6.3.2.9" evidence="1"/>
<dbReference type="EMBL" id="CP000057">
    <property type="protein sequence ID" value="AAX88137.1"/>
    <property type="molecule type" value="Genomic_DNA"/>
</dbReference>
<dbReference type="RefSeq" id="WP_005690684.1">
    <property type="nucleotide sequence ID" value="NC_007146.2"/>
</dbReference>
<dbReference type="SMR" id="Q4QLG0"/>
<dbReference type="GeneID" id="93220142"/>
<dbReference type="KEGG" id="hit:NTHI1303"/>
<dbReference type="HOGENOM" id="CLU_032540_1_0_6"/>
<dbReference type="UniPathway" id="UPA00219"/>
<dbReference type="Proteomes" id="UP000002525">
    <property type="component" value="Chromosome"/>
</dbReference>
<dbReference type="GO" id="GO:0005737">
    <property type="term" value="C:cytoplasm"/>
    <property type="evidence" value="ECO:0007669"/>
    <property type="project" value="UniProtKB-SubCell"/>
</dbReference>
<dbReference type="GO" id="GO:0005524">
    <property type="term" value="F:ATP binding"/>
    <property type="evidence" value="ECO:0007669"/>
    <property type="project" value="UniProtKB-UniRule"/>
</dbReference>
<dbReference type="GO" id="GO:0008764">
    <property type="term" value="F:UDP-N-acetylmuramoylalanine-D-glutamate ligase activity"/>
    <property type="evidence" value="ECO:0007669"/>
    <property type="project" value="UniProtKB-UniRule"/>
</dbReference>
<dbReference type="GO" id="GO:0051301">
    <property type="term" value="P:cell division"/>
    <property type="evidence" value="ECO:0007669"/>
    <property type="project" value="UniProtKB-KW"/>
</dbReference>
<dbReference type="GO" id="GO:0071555">
    <property type="term" value="P:cell wall organization"/>
    <property type="evidence" value="ECO:0007669"/>
    <property type="project" value="UniProtKB-KW"/>
</dbReference>
<dbReference type="GO" id="GO:0009252">
    <property type="term" value="P:peptidoglycan biosynthetic process"/>
    <property type="evidence" value="ECO:0007669"/>
    <property type="project" value="UniProtKB-UniRule"/>
</dbReference>
<dbReference type="GO" id="GO:0008360">
    <property type="term" value="P:regulation of cell shape"/>
    <property type="evidence" value="ECO:0007669"/>
    <property type="project" value="UniProtKB-KW"/>
</dbReference>
<dbReference type="Gene3D" id="3.90.190.20">
    <property type="entry name" value="Mur ligase, C-terminal domain"/>
    <property type="match status" value="1"/>
</dbReference>
<dbReference type="Gene3D" id="3.40.1190.10">
    <property type="entry name" value="Mur-like, catalytic domain"/>
    <property type="match status" value="1"/>
</dbReference>
<dbReference type="Gene3D" id="3.40.50.720">
    <property type="entry name" value="NAD(P)-binding Rossmann-like Domain"/>
    <property type="match status" value="1"/>
</dbReference>
<dbReference type="HAMAP" id="MF_00639">
    <property type="entry name" value="MurD"/>
    <property type="match status" value="1"/>
</dbReference>
<dbReference type="InterPro" id="IPR036565">
    <property type="entry name" value="Mur-like_cat_sf"/>
</dbReference>
<dbReference type="InterPro" id="IPR004101">
    <property type="entry name" value="Mur_ligase_C"/>
</dbReference>
<dbReference type="InterPro" id="IPR036615">
    <property type="entry name" value="Mur_ligase_C_dom_sf"/>
</dbReference>
<dbReference type="InterPro" id="IPR013221">
    <property type="entry name" value="Mur_ligase_cen"/>
</dbReference>
<dbReference type="InterPro" id="IPR005762">
    <property type="entry name" value="MurD"/>
</dbReference>
<dbReference type="NCBIfam" id="TIGR01087">
    <property type="entry name" value="murD"/>
    <property type="match status" value="1"/>
</dbReference>
<dbReference type="PANTHER" id="PTHR43692">
    <property type="entry name" value="UDP-N-ACETYLMURAMOYLALANINE--D-GLUTAMATE LIGASE"/>
    <property type="match status" value="1"/>
</dbReference>
<dbReference type="PANTHER" id="PTHR43692:SF1">
    <property type="entry name" value="UDP-N-ACETYLMURAMOYLALANINE--D-GLUTAMATE LIGASE"/>
    <property type="match status" value="1"/>
</dbReference>
<dbReference type="Pfam" id="PF02875">
    <property type="entry name" value="Mur_ligase_C"/>
    <property type="match status" value="1"/>
</dbReference>
<dbReference type="Pfam" id="PF08245">
    <property type="entry name" value="Mur_ligase_M"/>
    <property type="match status" value="1"/>
</dbReference>
<dbReference type="Pfam" id="PF21799">
    <property type="entry name" value="MurD-like_N"/>
    <property type="match status" value="1"/>
</dbReference>
<dbReference type="SUPFAM" id="SSF51984">
    <property type="entry name" value="MurCD N-terminal domain"/>
    <property type="match status" value="1"/>
</dbReference>
<dbReference type="SUPFAM" id="SSF53623">
    <property type="entry name" value="MurD-like peptide ligases, catalytic domain"/>
    <property type="match status" value="1"/>
</dbReference>
<dbReference type="SUPFAM" id="SSF53244">
    <property type="entry name" value="MurD-like peptide ligases, peptide-binding domain"/>
    <property type="match status" value="1"/>
</dbReference>
<accession>Q4QLG0</accession>
<organism>
    <name type="scientific">Haemophilus influenzae (strain 86-028NP)</name>
    <dbReference type="NCBI Taxonomy" id="281310"/>
    <lineage>
        <taxon>Bacteria</taxon>
        <taxon>Pseudomonadati</taxon>
        <taxon>Pseudomonadota</taxon>
        <taxon>Gammaproteobacteria</taxon>
        <taxon>Pasteurellales</taxon>
        <taxon>Pasteurellaceae</taxon>
        <taxon>Haemophilus</taxon>
    </lineage>
</organism>
<protein>
    <recommendedName>
        <fullName evidence="1">UDP-N-acetylmuramoylalanine--D-glutamate ligase</fullName>
        <ecNumber evidence="1">6.3.2.9</ecNumber>
    </recommendedName>
    <alternativeName>
        <fullName evidence="1">D-glutamic acid-adding enzyme</fullName>
    </alternativeName>
    <alternativeName>
        <fullName evidence="1">UDP-N-acetylmuramoyl-L-alanyl-D-glutamate synthetase</fullName>
    </alternativeName>
</protein>
<keyword id="KW-0067">ATP-binding</keyword>
<keyword id="KW-0131">Cell cycle</keyword>
<keyword id="KW-0132">Cell division</keyword>
<keyword id="KW-0133">Cell shape</keyword>
<keyword id="KW-0961">Cell wall biogenesis/degradation</keyword>
<keyword id="KW-0963">Cytoplasm</keyword>
<keyword id="KW-0436">Ligase</keyword>
<keyword id="KW-0547">Nucleotide-binding</keyword>
<keyword id="KW-0573">Peptidoglycan synthesis</keyword>
<reference key="1">
    <citation type="journal article" date="2005" name="J. Bacteriol.">
        <title>Genomic sequence of an otitis media isolate of nontypeable Haemophilus influenzae: comparative study with H. influenzae serotype d, strain KW20.</title>
        <authorList>
            <person name="Harrison A."/>
            <person name="Dyer D.W."/>
            <person name="Gillaspy A."/>
            <person name="Ray W.C."/>
            <person name="Mungur R."/>
            <person name="Carson M.B."/>
            <person name="Zhong H."/>
            <person name="Gipson J."/>
            <person name="Gipson M."/>
            <person name="Johnson L.S."/>
            <person name="Lewis L."/>
            <person name="Bakaletz L.O."/>
            <person name="Munson R.S. Jr."/>
        </authorList>
    </citation>
    <scope>NUCLEOTIDE SEQUENCE [LARGE SCALE GENOMIC DNA]</scope>
    <source>
        <strain>86-028NP</strain>
    </source>
</reference>
<proteinExistence type="inferred from homology"/>
<feature type="chain" id="PRO_0000109024" description="UDP-N-acetylmuramoylalanine--D-glutamate ligase">
    <location>
        <begin position="1"/>
        <end position="437"/>
    </location>
</feature>
<feature type="binding site" evidence="1">
    <location>
        <begin position="112"/>
        <end position="118"/>
    </location>
    <ligand>
        <name>ATP</name>
        <dbReference type="ChEBI" id="CHEBI:30616"/>
    </ligand>
</feature>